<reference key="1">
    <citation type="journal article" date="2005" name="Science">
        <title>The transcriptional landscape of the mammalian genome.</title>
        <authorList>
            <person name="Carninci P."/>
            <person name="Kasukawa T."/>
            <person name="Katayama S."/>
            <person name="Gough J."/>
            <person name="Frith M.C."/>
            <person name="Maeda N."/>
            <person name="Oyama R."/>
            <person name="Ravasi T."/>
            <person name="Lenhard B."/>
            <person name="Wells C."/>
            <person name="Kodzius R."/>
            <person name="Shimokawa K."/>
            <person name="Bajic V.B."/>
            <person name="Brenner S.E."/>
            <person name="Batalov S."/>
            <person name="Forrest A.R."/>
            <person name="Zavolan M."/>
            <person name="Davis M.J."/>
            <person name="Wilming L.G."/>
            <person name="Aidinis V."/>
            <person name="Allen J.E."/>
            <person name="Ambesi-Impiombato A."/>
            <person name="Apweiler R."/>
            <person name="Aturaliya R.N."/>
            <person name="Bailey T.L."/>
            <person name="Bansal M."/>
            <person name="Baxter L."/>
            <person name="Beisel K.W."/>
            <person name="Bersano T."/>
            <person name="Bono H."/>
            <person name="Chalk A.M."/>
            <person name="Chiu K.P."/>
            <person name="Choudhary V."/>
            <person name="Christoffels A."/>
            <person name="Clutterbuck D.R."/>
            <person name="Crowe M.L."/>
            <person name="Dalla E."/>
            <person name="Dalrymple B.P."/>
            <person name="de Bono B."/>
            <person name="Della Gatta G."/>
            <person name="di Bernardo D."/>
            <person name="Down T."/>
            <person name="Engstrom P."/>
            <person name="Fagiolini M."/>
            <person name="Faulkner G."/>
            <person name="Fletcher C.F."/>
            <person name="Fukushima T."/>
            <person name="Furuno M."/>
            <person name="Futaki S."/>
            <person name="Gariboldi M."/>
            <person name="Georgii-Hemming P."/>
            <person name="Gingeras T.R."/>
            <person name="Gojobori T."/>
            <person name="Green R.E."/>
            <person name="Gustincich S."/>
            <person name="Harbers M."/>
            <person name="Hayashi Y."/>
            <person name="Hensch T.K."/>
            <person name="Hirokawa N."/>
            <person name="Hill D."/>
            <person name="Huminiecki L."/>
            <person name="Iacono M."/>
            <person name="Ikeo K."/>
            <person name="Iwama A."/>
            <person name="Ishikawa T."/>
            <person name="Jakt M."/>
            <person name="Kanapin A."/>
            <person name="Katoh M."/>
            <person name="Kawasawa Y."/>
            <person name="Kelso J."/>
            <person name="Kitamura H."/>
            <person name="Kitano H."/>
            <person name="Kollias G."/>
            <person name="Krishnan S.P."/>
            <person name="Kruger A."/>
            <person name="Kummerfeld S.K."/>
            <person name="Kurochkin I.V."/>
            <person name="Lareau L.F."/>
            <person name="Lazarevic D."/>
            <person name="Lipovich L."/>
            <person name="Liu J."/>
            <person name="Liuni S."/>
            <person name="McWilliam S."/>
            <person name="Madan Babu M."/>
            <person name="Madera M."/>
            <person name="Marchionni L."/>
            <person name="Matsuda H."/>
            <person name="Matsuzawa S."/>
            <person name="Miki H."/>
            <person name="Mignone F."/>
            <person name="Miyake S."/>
            <person name="Morris K."/>
            <person name="Mottagui-Tabar S."/>
            <person name="Mulder N."/>
            <person name="Nakano N."/>
            <person name="Nakauchi H."/>
            <person name="Ng P."/>
            <person name="Nilsson R."/>
            <person name="Nishiguchi S."/>
            <person name="Nishikawa S."/>
            <person name="Nori F."/>
            <person name="Ohara O."/>
            <person name="Okazaki Y."/>
            <person name="Orlando V."/>
            <person name="Pang K.C."/>
            <person name="Pavan W.J."/>
            <person name="Pavesi G."/>
            <person name="Pesole G."/>
            <person name="Petrovsky N."/>
            <person name="Piazza S."/>
            <person name="Reed J."/>
            <person name="Reid J.F."/>
            <person name="Ring B.Z."/>
            <person name="Ringwald M."/>
            <person name="Rost B."/>
            <person name="Ruan Y."/>
            <person name="Salzberg S.L."/>
            <person name="Sandelin A."/>
            <person name="Schneider C."/>
            <person name="Schoenbach C."/>
            <person name="Sekiguchi K."/>
            <person name="Semple C.A."/>
            <person name="Seno S."/>
            <person name="Sessa L."/>
            <person name="Sheng Y."/>
            <person name="Shibata Y."/>
            <person name="Shimada H."/>
            <person name="Shimada K."/>
            <person name="Silva D."/>
            <person name="Sinclair B."/>
            <person name="Sperling S."/>
            <person name="Stupka E."/>
            <person name="Sugiura K."/>
            <person name="Sultana R."/>
            <person name="Takenaka Y."/>
            <person name="Taki K."/>
            <person name="Tammoja K."/>
            <person name="Tan S.L."/>
            <person name="Tang S."/>
            <person name="Taylor M.S."/>
            <person name="Tegner J."/>
            <person name="Teichmann S.A."/>
            <person name="Ueda H.R."/>
            <person name="van Nimwegen E."/>
            <person name="Verardo R."/>
            <person name="Wei C.L."/>
            <person name="Yagi K."/>
            <person name="Yamanishi H."/>
            <person name="Zabarovsky E."/>
            <person name="Zhu S."/>
            <person name="Zimmer A."/>
            <person name="Hide W."/>
            <person name="Bult C."/>
            <person name="Grimmond S.M."/>
            <person name="Teasdale R.D."/>
            <person name="Liu E.T."/>
            <person name="Brusic V."/>
            <person name="Quackenbush J."/>
            <person name="Wahlestedt C."/>
            <person name="Mattick J.S."/>
            <person name="Hume D.A."/>
            <person name="Kai C."/>
            <person name="Sasaki D."/>
            <person name="Tomaru Y."/>
            <person name="Fukuda S."/>
            <person name="Kanamori-Katayama M."/>
            <person name="Suzuki M."/>
            <person name="Aoki J."/>
            <person name="Arakawa T."/>
            <person name="Iida J."/>
            <person name="Imamura K."/>
            <person name="Itoh M."/>
            <person name="Kato T."/>
            <person name="Kawaji H."/>
            <person name="Kawagashira N."/>
            <person name="Kawashima T."/>
            <person name="Kojima M."/>
            <person name="Kondo S."/>
            <person name="Konno H."/>
            <person name="Nakano K."/>
            <person name="Ninomiya N."/>
            <person name="Nishio T."/>
            <person name="Okada M."/>
            <person name="Plessy C."/>
            <person name="Shibata K."/>
            <person name="Shiraki T."/>
            <person name="Suzuki S."/>
            <person name="Tagami M."/>
            <person name="Waki K."/>
            <person name="Watahiki A."/>
            <person name="Okamura-Oho Y."/>
            <person name="Suzuki H."/>
            <person name="Kawai J."/>
            <person name="Hayashizaki Y."/>
        </authorList>
    </citation>
    <scope>NUCLEOTIDE SEQUENCE [LARGE SCALE MRNA]</scope>
    <source>
        <strain>BALB/cJ</strain>
        <strain>C57BL/6J</strain>
        <tissue>Corpora quadrigemina</tissue>
        <tissue>Visual cortex</tissue>
    </source>
</reference>
<reference key="2">
    <citation type="journal article" date="2009" name="PLoS Biol.">
        <title>Lineage-specific biology revealed by a finished genome assembly of the mouse.</title>
        <authorList>
            <person name="Church D.M."/>
            <person name="Goodstadt L."/>
            <person name="Hillier L.W."/>
            <person name="Zody M.C."/>
            <person name="Goldstein S."/>
            <person name="She X."/>
            <person name="Bult C.J."/>
            <person name="Agarwala R."/>
            <person name="Cherry J.L."/>
            <person name="DiCuccio M."/>
            <person name="Hlavina W."/>
            <person name="Kapustin Y."/>
            <person name="Meric P."/>
            <person name="Maglott D."/>
            <person name="Birtle Z."/>
            <person name="Marques A.C."/>
            <person name="Graves T."/>
            <person name="Zhou S."/>
            <person name="Teague B."/>
            <person name="Potamousis K."/>
            <person name="Churas C."/>
            <person name="Place M."/>
            <person name="Herschleb J."/>
            <person name="Runnheim R."/>
            <person name="Forrest D."/>
            <person name="Amos-Landgraf J."/>
            <person name="Schwartz D.C."/>
            <person name="Cheng Z."/>
            <person name="Lindblad-Toh K."/>
            <person name="Eichler E.E."/>
            <person name="Ponting C.P."/>
        </authorList>
    </citation>
    <scope>NUCLEOTIDE SEQUENCE [LARGE SCALE GENOMIC DNA]</scope>
    <source>
        <strain>C57BL/6J</strain>
    </source>
</reference>
<reference key="3">
    <citation type="submission" date="2005-07" db="EMBL/GenBank/DDBJ databases">
        <authorList>
            <person name="Mural R.J."/>
            <person name="Adams M.D."/>
            <person name="Myers E.W."/>
            <person name="Smith H.O."/>
            <person name="Venter J.C."/>
        </authorList>
    </citation>
    <scope>NUCLEOTIDE SEQUENCE [LARGE SCALE GENOMIC DNA]</scope>
</reference>
<reference key="4">
    <citation type="journal article" date="2004" name="Genome Res.">
        <title>The status, quality, and expansion of the NIH full-length cDNA project: the Mammalian Gene Collection (MGC).</title>
        <authorList>
            <consortium name="The MGC Project Team"/>
        </authorList>
    </citation>
    <scope>NUCLEOTIDE SEQUENCE [LARGE SCALE MRNA]</scope>
    <source>
        <strain>FVB/N</strain>
        <tissue>Mammary tumor</tissue>
    </source>
</reference>
<reference key="5">
    <citation type="journal article" date="2007" name="J. Immunol.">
        <title>Quantitative time-resolved phosphoproteomic analysis of mast cell signaling.</title>
        <authorList>
            <person name="Cao L."/>
            <person name="Yu K."/>
            <person name="Banh C."/>
            <person name="Nguyen V."/>
            <person name="Ritz A."/>
            <person name="Raphael B.J."/>
            <person name="Kawakami Y."/>
            <person name="Kawakami T."/>
            <person name="Salomon A.R."/>
        </authorList>
    </citation>
    <scope>PHOSPHORYLATION [LARGE SCALE ANALYSIS] AT TYR-147</scope>
    <scope>IDENTIFICATION BY MASS SPECTROMETRY [LARGE SCALE ANALYSIS]</scope>
    <source>
        <tissue>Mast cell</tissue>
    </source>
</reference>
<reference key="6">
    <citation type="journal article" date="2007" name="Proc. Natl. Acad. Sci. U.S.A.">
        <title>Large-scale phosphorylation analysis of mouse liver.</title>
        <authorList>
            <person name="Villen J."/>
            <person name="Beausoleil S.A."/>
            <person name="Gerber S.A."/>
            <person name="Gygi S.P."/>
        </authorList>
    </citation>
    <scope>PHOSPHORYLATION [LARGE SCALE ANALYSIS] AT SER-15 AND SER-17</scope>
    <scope>IDENTIFICATION BY MASS SPECTROMETRY [LARGE SCALE ANALYSIS]</scope>
    <source>
        <tissue>Liver</tissue>
    </source>
</reference>
<reference key="7">
    <citation type="journal article" date="2009" name="Immunity">
        <title>The phagosomal proteome in interferon-gamma-activated macrophages.</title>
        <authorList>
            <person name="Trost M."/>
            <person name="English L."/>
            <person name="Lemieux S."/>
            <person name="Courcelles M."/>
            <person name="Desjardins M."/>
            <person name="Thibault P."/>
        </authorList>
    </citation>
    <scope>PHOSPHORYLATION [LARGE SCALE ANALYSIS] AT SER-261</scope>
    <scope>IDENTIFICATION BY MASS SPECTROMETRY [LARGE SCALE ANALYSIS]</scope>
</reference>
<reference key="8">
    <citation type="journal article" date="2010" name="Cell">
        <title>A tissue-specific atlas of mouse protein phosphorylation and expression.</title>
        <authorList>
            <person name="Huttlin E.L."/>
            <person name="Jedrychowski M.P."/>
            <person name="Elias J.E."/>
            <person name="Goswami T."/>
            <person name="Rad R."/>
            <person name="Beausoleil S.A."/>
            <person name="Villen J."/>
            <person name="Haas W."/>
            <person name="Sowa M.E."/>
            <person name="Gygi S.P."/>
        </authorList>
    </citation>
    <scope>PHOSPHORYLATION [LARGE SCALE ANALYSIS] AT SER-15; SER-17 AND SER-261</scope>
    <scope>IDENTIFICATION BY MASS SPECTROMETRY [LARGE SCALE ANALYSIS]</scope>
    <source>
        <tissue>Brain</tissue>
        <tissue>Brown adipose tissue</tissue>
        <tissue>Heart</tissue>
        <tissue>Kidney</tissue>
        <tissue>Liver</tissue>
        <tissue>Lung</tissue>
        <tissue>Pancreas</tissue>
        <tissue>Spleen</tissue>
        <tissue>Testis</tissue>
    </source>
</reference>
<comment type="function">
    <text evidence="1">Plays a role in pre-mRNA splicing by promoting usage of the upstream 3'-splice site at alternative NAGNAG splice sites; these are sites featuring alternative acceptor motifs separated by only a few nucleotides (By similarity). May also modulate exon inclusion events (By similarity). PPlays a role in spliceosomal remodeling by displacing WBP4 from SNRNP200 and may act to inhibit SNRNP200 helicase activity (By similarity). Binds U5 snRNA (By similarity). Required for proper chromosome segregation (By similarity). Not required for splicing of shelterin components (By similarity).</text>
</comment>
<comment type="subunit">
    <text evidence="1">Component of the spliceosome (By similarity). Interacts with SNRNP200; the interaction is direct (By similarity). Interacts with PRPF8 (By similarity).</text>
</comment>
<comment type="subcellular location">
    <subcellularLocation>
        <location evidence="1">Nucleus</location>
    </subcellularLocation>
    <subcellularLocation>
        <location evidence="1">Chromosome</location>
        <location evidence="1">Centromere</location>
    </subcellularLocation>
    <text evidence="1">Dispersed throughout the nucleus during interphase (By similarity). Colocalizes with microtubule attachment sites at centromeres following mitotic checkpoint activation (By similarity).</text>
</comment>
<comment type="similarity">
    <text>Belongs to the TLS1 family.</text>
</comment>
<keyword id="KW-0137">Centromere</keyword>
<keyword id="KW-0158">Chromosome</keyword>
<keyword id="KW-0159">Chromosome partition</keyword>
<keyword id="KW-0507">mRNA processing</keyword>
<keyword id="KW-0508">mRNA splicing</keyword>
<keyword id="KW-0539">Nucleus</keyword>
<keyword id="KW-0597">Phosphoprotein</keyword>
<keyword id="KW-1185">Reference proteome</keyword>
<keyword id="KW-0694">RNA-binding</keyword>
<keyword id="KW-0747">Spliceosome</keyword>
<protein>
    <recommendedName>
        <fullName evidence="3">Splicing factor C9orf78 homolog</fullName>
    </recommendedName>
</protein>
<evidence type="ECO:0000250" key="1">
    <source>
        <dbReference type="UniProtKB" id="Q9NZ63"/>
    </source>
</evidence>
<evidence type="ECO:0000256" key="2">
    <source>
        <dbReference type="SAM" id="MobiDB-lite"/>
    </source>
</evidence>
<evidence type="ECO:0000305" key="3"/>
<evidence type="ECO:0007744" key="4">
    <source>
    </source>
</evidence>
<evidence type="ECO:0007744" key="5">
    <source>
    </source>
</evidence>
<evidence type="ECO:0007744" key="6">
    <source>
    </source>
</evidence>
<evidence type="ECO:0007744" key="7">
    <source>
    </source>
</evidence>
<accession>Q3TQI7</accession>
<accession>Q99JW3</accession>
<feature type="chain" id="PRO_0000227524" description="Splicing factor C9orf78 homolog">
    <location>
        <begin position="1"/>
        <end position="289"/>
    </location>
</feature>
<feature type="region of interest" description="Disordered" evidence="2">
    <location>
        <begin position="1"/>
        <end position="30"/>
    </location>
</feature>
<feature type="region of interest" description="Interaction with SNRNP200" evidence="1">
    <location>
        <begin position="5"/>
        <end position="58"/>
    </location>
</feature>
<feature type="region of interest" description="Disordered" evidence="2">
    <location>
        <begin position="85"/>
        <end position="111"/>
    </location>
</feature>
<feature type="region of interest" description="Disordered" evidence="2">
    <location>
        <begin position="232"/>
        <end position="289"/>
    </location>
</feature>
<feature type="compositionally biased region" description="Basic and acidic residues" evidence="2">
    <location>
        <begin position="232"/>
        <end position="283"/>
    </location>
</feature>
<feature type="modified residue" description="Phosphoserine" evidence="4 7">
    <location>
        <position position="15"/>
    </location>
</feature>
<feature type="modified residue" description="Phosphoserine" evidence="4 7">
    <location>
        <position position="17"/>
    </location>
</feature>
<feature type="modified residue" description="Phosphotyrosine" evidence="5">
    <location>
        <position position="147"/>
    </location>
</feature>
<feature type="modified residue" description="Phosphothreonine" evidence="1">
    <location>
        <position position="253"/>
    </location>
</feature>
<feature type="modified residue" description="Phosphoserine" evidence="6 7">
    <location>
        <position position="261"/>
    </location>
</feature>
<feature type="sequence conflict" description="In Ref. 1; BAE37395." evidence="3" ref="1">
    <original>R</original>
    <variation>G</variation>
    <location>
        <position position="35"/>
    </location>
</feature>
<name>TLS1_MOUSE</name>
<dbReference type="EMBL" id="AK163554">
    <property type="protein sequence ID" value="BAE37395.1"/>
    <property type="molecule type" value="mRNA"/>
</dbReference>
<dbReference type="EMBL" id="AK158706">
    <property type="protein sequence ID" value="BAE34621.1"/>
    <property type="molecule type" value="mRNA"/>
</dbReference>
<dbReference type="EMBL" id="AK168109">
    <property type="protein sequence ID" value="BAE40080.1"/>
    <property type="molecule type" value="mRNA"/>
</dbReference>
<dbReference type="EMBL" id="AL844532">
    <property type="status" value="NOT_ANNOTATED_CDS"/>
    <property type="molecule type" value="Genomic_DNA"/>
</dbReference>
<dbReference type="EMBL" id="AL844546">
    <property type="status" value="NOT_ANNOTATED_CDS"/>
    <property type="molecule type" value="Genomic_DNA"/>
</dbReference>
<dbReference type="EMBL" id="CH466542">
    <property type="protein sequence ID" value="EDL08499.1"/>
    <property type="molecule type" value="Genomic_DNA"/>
</dbReference>
<dbReference type="EMBL" id="BC005624">
    <property type="protein sequence ID" value="AAH05624.1"/>
    <property type="molecule type" value="mRNA"/>
</dbReference>
<dbReference type="CCDS" id="CCDS15892.1"/>
<dbReference type="RefSeq" id="NP_659134.1">
    <property type="nucleotide sequence ID" value="NM_144885.3"/>
</dbReference>
<dbReference type="SMR" id="Q3TQI7"/>
<dbReference type="BioGRID" id="230669">
    <property type="interactions" value="2"/>
</dbReference>
<dbReference type="FunCoup" id="Q3TQI7">
    <property type="interactions" value="4200"/>
</dbReference>
<dbReference type="STRING" id="10090.ENSMUSP00000028205"/>
<dbReference type="iPTMnet" id="Q3TQI7"/>
<dbReference type="PhosphoSitePlus" id="Q3TQI7"/>
<dbReference type="jPOST" id="Q3TQI7"/>
<dbReference type="PaxDb" id="10090-ENSMUSP00000028205"/>
<dbReference type="PeptideAtlas" id="Q3TQI7"/>
<dbReference type="Pumba" id="Q3TQI7"/>
<dbReference type="Antibodypedia" id="17917">
    <property type="antibodies" value="116 antibodies from 23 providers"/>
</dbReference>
<dbReference type="DNASU" id="227707"/>
<dbReference type="Ensembl" id="ENSMUST00000028205.10">
    <property type="protein sequence ID" value="ENSMUSP00000028205.9"/>
    <property type="gene ID" value="ENSMUSG00000026851.10"/>
</dbReference>
<dbReference type="GeneID" id="227707"/>
<dbReference type="KEGG" id="mmu:227707"/>
<dbReference type="UCSC" id="uc008jdd.2">
    <property type="organism name" value="mouse"/>
</dbReference>
<dbReference type="AGR" id="MGI:2385132"/>
<dbReference type="MGI" id="MGI:2385132">
    <property type="gene designation" value="BC005624"/>
</dbReference>
<dbReference type="VEuPathDB" id="HostDB:ENSMUSG00000026851"/>
<dbReference type="eggNOG" id="KOG3345">
    <property type="taxonomic scope" value="Eukaryota"/>
</dbReference>
<dbReference type="GeneTree" id="ENSGT00390000009787"/>
<dbReference type="HOGENOM" id="CLU_053736_1_0_1"/>
<dbReference type="InParanoid" id="Q3TQI7"/>
<dbReference type="OMA" id="NIKTGGM"/>
<dbReference type="OrthoDB" id="5627at2759"/>
<dbReference type="PhylomeDB" id="Q3TQI7"/>
<dbReference type="TreeFam" id="TF105871"/>
<dbReference type="Reactome" id="R-MMU-72163">
    <property type="pathway name" value="mRNA Splicing - Major Pathway"/>
</dbReference>
<dbReference type="BioGRID-ORCS" id="227707">
    <property type="hits" value="19 hits in 78 CRISPR screens"/>
</dbReference>
<dbReference type="PRO" id="PR:Q3TQI7"/>
<dbReference type="Proteomes" id="UP000000589">
    <property type="component" value="Chromosome 2"/>
</dbReference>
<dbReference type="RNAct" id="Q3TQI7">
    <property type="molecule type" value="protein"/>
</dbReference>
<dbReference type="Bgee" id="ENSMUSG00000026851">
    <property type="expression patterns" value="Expressed in retinal neural layer and 65 other cell types or tissues"/>
</dbReference>
<dbReference type="GO" id="GO:0000775">
    <property type="term" value="C:chromosome, centromeric region"/>
    <property type="evidence" value="ECO:0007669"/>
    <property type="project" value="UniProtKB-SubCell"/>
</dbReference>
<dbReference type="GO" id="GO:0005829">
    <property type="term" value="C:cytosol"/>
    <property type="evidence" value="ECO:0007669"/>
    <property type="project" value="Ensembl"/>
</dbReference>
<dbReference type="GO" id="GO:0005654">
    <property type="term" value="C:nucleoplasm"/>
    <property type="evidence" value="ECO:0007669"/>
    <property type="project" value="Ensembl"/>
</dbReference>
<dbReference type="GO" id="GO:0005681">
    <property type="term" value="C:spliceosomal complex"/>
    <property type="evidence" value="ECO:0007669"/>
    <property type="project" value="UniProtKB-KW"/>
</dbReference>
<dbReference type="GO" id="GO:0030623">
    <property type="term" value="F:U5 snRNA binding"/>
    <property type="evidence" value="ECO:0007669"/>
    <property type="project" value="Ensembl"/>
</dbReference>
<dbReference type="GO" id="GO:0007059">
    <property type="term" value="P:chromosome segregation"/>
    <property type="evidence" value="ECO:0007669"/>
    <property type="project" value="UniProtKB-KW"/>
</dbReference>
<dbReference type="GO" id="GO:0045292">
    <property type="term" value="P:mRNA cis splicing, via spliceosome"/>
    <property type="evidence" value="ECO:0007669"/>
    <property type="project" value="Ensembl"/>
</dbReference>
<dbReference type="GO" id="GO:0060629">
    <property type="term" value="P:regulation of homologous chromosome segregation"/>
    <property type="evidence" value="ECO:0007669"/>
    <property type="project" value="Ensembl"/>
</dbReference>
<dbReference type="InterPro" id="IPR010756">
    <property type="entry name" value="Tls1-like"/>
</dbReference>
<dbReference type="PANTHER" id="PTHR13486:SF2">
    <property type="entry name" value="SPLICING FACTOR C9ORF78"/>
    <property type="match status" value="1"/>
</dbReference>
<dbReference type="PANTHER" id="PTHR13486">
    <property type="entry name" value="TELOMERE LENGTH AND SILENCING PROTEIN 1 TLS1 FAMILY MEMBER"/>
    <property type="match status" value="1"/>
</dbReference>
<dbReference type="Pfam" id="PF07052">
    <property type="entry name" value="Hep_59"/>
    <property type="match status" value="1"/>
</dbReference>
<proteinExistence type="evidence at protein level"/>
<organism>
    <name type="scientific">Mus musculus</name>
    <name type="common">Mouse</name>
    <dbReference type="NCBI Taxonomy" id="10090"/>
    <lineage>
        <taxon>Eukaryota</taxon>
        <taxon>Metazoa</taxon>
        <taxon>Chordata</taxon>
        <taxon>Craniata</taxon>
        <taxon>Vertebrata</taxon>
        <taxon>Euteleostomi</taxon>
        <taxon>Mammalia</taxon>
        <taxon>Eutheria</taxon>
        <taxon>Euarchontoglires</taxon>
        <taxon>Glires</taxon>
        <taxon>Rodentia</taxon>
        <taxon>Myomorpha</taxon>
        <taxon>Muroidea</taxon>
        <taxon>Muridae</taxon>
        <taxon>Murinae</taxon>
        <taxon>Mus</taxon>
        <taxon>Mus</taxon>
    </lineage>
</organism>
<sequence>MRITGKTFRRRRADSESEEDEQESEEVRLKLEETREVQNLRKRPNGVSAAALLVGEKVQEETTLVDDPFQMATGGMVDMKKLKERGKDKVSEEEDLHLGTSFSAETNRRDEDADMMKYIETELKKRKGIVEQEEQKAKPKNAEDCLYELPENIRVSSAKKTEEMLSNQMLSGIPEVDLGIDAKIKNIISTEDAKARLLAEQQNKKKDSETSFVPTNMAVNYVQHNRFYHEELNAPIRRNKEEPKARPLRVGDTEKPEPERSPPNRKRPANEKATDDYHYEKFKKMNRRY</sequence>